<feature type="chain" id="PRO_1000096223" description="Elongation factor P">
    <location>
        <begin position="1"/>
        <end position="188"/>
    </location>
</feature>
<organism>
    <name type="scientific">Wolbachia pipientis subsp. Culex pipiens (strain wPip)</name>
    <dbReference type="NCBI Taxonomy" id="570417"/>
    <lineage>
        <taxon>Bacteria</taxon>
        <taxon>Pseudomonadati</taxon>
        <taxon>Pseudomonadota</taxon>
        <taxon>Alphaproteobacteria</taxon>
        <taxon>Rickettsiales</taxon>
        <taxon>Anaplasmataceae</taxon>
        <taxon>Wolbachieae</taxon>
        <taxon>Wolbachia</taxon>
    </lineage>
</organism>
<name>EFP_WOLPP</name>
<reference key="1">
    <citation type="journal article" date="2008" name="Mol. Biol. Evol.">
        <title>Genome evolution of Wolbachia strain wPip from the Culex pipiens group.</title>
        <authorList>
            <person name="Klasson L."/>
            <person name="Walker T."/>
            <person name="Sebaihia M."/>
            <person name="Sanders M.J."/>
            <person name="Quail M.A."/>
            <person name="Lord A."/>
            <person name="Sanders S."/>
            <person name="Earl J."/>
            <person name="O'Neill S.L."/>
            <person name="Thomson N."/>
            <person name="Sinkins S.P."/>
            <person name="Parkhill J."/>
        </authorList>
    </citation>
    <scope>NUCLEOTIDE SEQUENCE [LARGE SCALE GENOMIC DNA]</scope>
    <source>
        <strain>wPip</strain>
    </source>
</reference>
<gene>
    <name evidence="1" type="primary">efp</name>
    <name type="ordered locus">WP0780</name>
</gene>
<protein>
    <recommendedName>
        <fullName evidence="1">Elongation factor P</fullName>
        <shortName evidence="1">EF-P</shortName>
    </recommendedName>
</protein>
<sequence length="188" mass="21343">MAERANDIRPGQVLEHNGGLFSVISIMHTQPGKGGAYIQAEMKNIQTGAKYYERFRSDATIRRAILDEEEYVYLFTEGNIVNLMHPSSYEQIVINLDLLGEKKAYLQDNMKIKVVTYQDKIISAHVPDHVTLTVKETESVIKGQTVTASYKPAILENGIRVNVPQFIKEGDKIVLHTPDNSYYERVKE</sequence>
<keyword id="KW-0963">Cytoplasm</keyword>
<keyword id="KW-0251">Elongation factor</keyword>
<keyword id="KW-0648">Protein biosynthesis</keyword>
<comment type="function">
    <text evidence="1">Involved in peptide bond synthesis. Stimulates efficient translation and peptide-bond synthesis on native or reconstituted 70S ribosomes in vitro. Probably functions indirectly by altering the affinity of the ribosome for aminoacyl-tRNA, thus increasing their reactivity as acceptors for peptidyl transferase.</text>
</comment>
<comment type="pathway">
    <text evidence="1">Protein biosynthesis; polypeptide chain elongation.</text>
</comment>
<comment type="subcellular location">
    <subcellularLocation>
        <location evidence="1">Cytoplasm</location>
    </subcellularLocation>
</comment>
<comment type="similarity">
    <text evidence="1">Belongs to the elongation factor P family.</text>
</comment>
<accession>B3CLX0</accession>
<evidence type="ECO:0000255" key="1">
    <source>
        <dbReference type="HAMAP-Rule" id="MF_00141"/>
    </source>
</evidence>
<proteinExistence type="inferred from homology"/>
<dbReference type="EMBL" id="AM999887">
    <property type="protein sequence ID" value="CAQ54888.1"/>
    <property type="molecule type" value="Genomic_DNA"/>
</dbReference>
<dbReference type="RefSeq" id="WP_007302193.1">
    <property type="nucleotide sequence ID" value="NC_010981.1"/>
</dbReference>
<dbReference type="SMR" id="B3CLX0"/>
<dbReference type="KEGG" id="wpi:WP0780"/>
<dbReference type="eggNOG" id="COG0231">
    <property type="taxonomic scope" value="Bacteria"/>
</dbReference>
<dbReference type="HOGENOM" id="CLU_074944_1_1_5"/>
<dbReference type="UniPathway" id="UPA00345"/>
<dbReference type="Proteomes" id="UP000008814">
    <property type="component" value="Chromosome"/>
</dbReference>
<dbReference type="GO" id="GO:0005737">
    <property type="term" value="C:cytoplasm"/>
    <property type="evidence" value="ECO:0007669"/>
    <property type="project" value="UniProtKB-SubCell"/>
</dbReference>
<dbReference type="GO" id="GO:0003746">
    <property type="term" value="F:translation elongation factor activity"/>
    <property type="evidence" value="ECO:0007669"/>
    <property type="project" value="UniProtKB-UniRule"/>
</dbReference>
<dbReference type="GO" id="GO:0043043">
    <property type="term" value="P:peptide biosynthetic process"/>
    <property type="evidence" value="ECO:0007669"/>
    <property type="project" value="InterPro"/>
</dbReference>
<dbReference type="CDD" id="cd05794">
    <property type="entry name" value="S1_EF-P_repeat_2"/>
    <property type="match status" value="1"/>
</dbReference>
<dbReference type="FunFam" id="2.40.50.140:FF:000004">
    <property type="entry name" value="Elongation factor P"/>
    <property type="match status" value="1"/>
</dbReference>
<dbReference type="Gene3D" id="2.30.30.30">
    <property type="match status" value="1"/>
</dbReference>
<dbReference type="Gene3D" id="2.40.50.140">
    <property type="entry name" value="Nucleic acid-binding proteins"/>
    <property type="match status" value="2"/>
</dbReference>
<dbReference type="HAMAP" id="MF_00141">
    <property type="entry name" value="EF_P"/>
    <property type="match status" value="1"/>
</dbReference>
<dbReference type="InterPro" id="IPR015365">
    <property type="entry name" value="Elong-fact-P_C"/>
</dbReference>
<dbReference type="InterPro" id="IPR012340">
    <property type="entry name" value="NA-bd_OB-fold"/>
</dbReference>
<dbReference type="InterPro" id="IPR014722">
    <property type="entry name" value="Rib_uL2_dom2"/>
</dbReference>
<dbReference type="InterPro" id="IPR020599">
    <property type="entry name" value="Transl_elong_fac_P/YeiP"/>
</dbReference>
<dbReference type="InterPro" id="IPR013185">
    <property type="entry name" value="Transl_elong_KOW-like"/>
</dbReference>
<dbReference type="InterPro" id="IPR001059">
    <property type="entry name" value="Transl_elong_P/YeiP_cen"/>
</dbReference>
<dbReference type="InterPro" id="IPR013852">
    <property type="entry name" value="Transl_elong_P/YeiP_CS"/>
</dbReference>
<dbReference type="InterPro" id="IPR011768">
    <property type="entry name" value="Transl_elongation_fac_P"/>
</dbReference>
<dbReference type="InterPro" id="IPR008991">
    <property type="entry name" value="Translation_prot_SH3-like_sf"/>
</dbReference>
<dbReference type="NCBIfam" id="TIGR00038">
    <property type="entry name" value="efp"/>
    <property type="match status" value="1"/>
</dbReference>
<dbReference type="NCBIfam" id="NF001810">
    <property type="entry name" value="PRK00529.1"/>
    <property type="match status" value="1"/>
</dbReference>
<dbReference type="PANTHER" id="PTHR30053">
    <property type="entry name" value="ELONGATION FACTOR P"/>
    <property type="match status" value="1"/>
</dbReference>
<dbReference type="PANTHER" id="PTHR30053:SF14">
    <property type="entry name" value="TRANSLATION ELONGATION FACTOR KOW-LIKE DOMAIN-CONTAINING PROTEIN"/>
    <property type="match status" value="1"/>
</dbReference>
<dbReference type="Pfam" id="PF01132">
    <property type="entry name" value="EFP"/>
    <property type="match status" value="1"/>
</dbReference>
<dbReference type="Pfam" id="PF08207">
    <property type="entry name" value="EFP_N"/>
    <property type="match status" value="1"/>
</dbReference>
<dbReference type="Pfam" id="PF09285">
    <property type="entry name" value="Elong-fact-P_C"/>
    <property type="match status" value="1"/>
</dbReference>
<dbReference type="PIRSF" id="PIRSF005901">
    <property type="entry name" value="EF-P"/>
    <property type="match status" value="1"/>
</dbReference>
<dbReference type="SMART" id="SM01185">
    <property type="entry name" value="EFP"/>
    <property type="match status" value="1"/>
</dbReference>
<dbReference type="SMART" id="SM00841">
    <property type="entry name" value="Elong-fact-P_C"/>
    <property type="match status" value="1"/>
</dbReference>
<dbReference type="SUPFAM" id="SSF50249">
    <property type="entry name" value="Nucleic acid-binding proteins"/>
    <property type="match status" value="2"/>
</dbReference>
<dbReference type="SUPFAM" id="SSF50104">
    <property type="entry name" value="Translation proteins SH3-like domain"/>
    <property type="match status" value="1"/>
</dbReference>
<dbReference type="PROSITE" id="PS01275">
    <property type="entry name" value="EFP"/>
    <property type="match status" value="1"/>
</dbReference>